<proteinExistence type="evidence at protein level"/>
<feature type="chain" id="PRO_0000060188" description="Putrescine transport system permease protein PotH">
    <location>
        <begin position="1"/>
        <end position="317"/>
    </location>
</feature>
<feature type="topological domain" description="Cytoplasmic" evidence="8">
    <location>
        <begin position="1"/>
        <end position="31"/>
    </location>
</feature>
<feature type="transmembrane region" description="Helical" evidence="2">
    <location>
        <begin position="32"/>
        <end position="51"/>
    </location>
</feature>
<feature type="topological domain" description="Periplasmic" evidence="8">
    <location>
        <begin position="52"/>
        <end position="104"/>
    </location>
</feature>
<feature type="transmembrane region" description="Helical" evidence="2">
    <location>
        <begin position="105"/>
        <end position="124"/>
    </location>
</feature>
<feature type="topological domain" description="Cytoplasmic" evidence="8">
    <location>
        <begin position="125"/>
        <end position="133"/>
    </location>
</feature>
<feature type="transmembrane region" description="Helical" evidence="2">
    <location>
        <begin position="134"/>
        <end position="153"/>
    </location>
</feature>
<feature type="topological domain" description="Periplasmic" evidence="8">
    <location>
        <begin position="154"/>
        <end position="184"/>
    </location>
</feature>
<feature type="transmembrane region" description="Helical" evidence="2">
    <location>
        <begin position="185"/>
        <end position="204"/>
    </location>
</feature>
<feature type="topological domain" description="Cytoplasmic" evidence="8">
    <location>
        <begin position="205"/>
        <end position="239"/>
    </location>
</feature>
<feature type="transmembrane region" description="Helical" evidence="2">
    <location>
        <begin position="240"/>
        <end position="259"/>
    </location>
</feature>
<feature type="topological domain" description="Periplasmic" evidence="8">
    <location>
        <begin position="260"/>
        <end position="284"/>
    </location>
</feature>
<feature type="transmembrane region" description="Helical" evidence="2">
    <location>
        <begin position="285"/>
        <end position="304"/>
    </location>
</feature>
<feature type="topological domain" description="Cytoplasmic" evidence="3">
    <location>
        <begin position="305"/>
        <end position="317"/>
    </location>
</feature>
<feature type="domain" description="ABC transmembrane type-1" evidence="2">
    <location>
        <begin position="99"/>
        <end position="305"/>
    </location>
</feature>
<dbReference type="EMBL" id="M93239">
    <property type="protein sequence ID" value="AAA24411.1"/>
    <property type="molecule type" value="Genomic_DNA"/>
</dbReference>
<dbReference type="EMBL" id="U00096">
    <property type="protein sequence ID" value="AAC73943.1"/>
    <property type="molecule type" value="Genomic_DNA"/>
</dbReference>
<dbReference type="EMBL" id="AP009048">
    <property type="protein sequence ID" value="BAA35567.1"/>
    <property type="molecule type" value="Genomic_DNA"/>
</dbReference>
<dbReference type="PIR" id="C45313">
    <property type="entry name" value="C45313"/>
</dbReference>
<dbReference type="RefSeq" id="NP_415377.1">
    <property type="nucleotide sequence ID" value="NC_000913.3"/>
</dbReference>
<dbReference type="RefSeq" id="WP_000105430.1">
    <property type="nucleotide sequence ID" value="NZ_SSZK01000002.1"/>
</dbReference>
<dbReference type="SMR" id="P31135"/>
<dbReference type="BioGRID" id="4259995">
    <property type="interactions" value="14"/>
</dbReference>
<dbReference type="BioGRID" id="849849">
    <property type="interactions" value="1"/>
</dbReference>
<dbReference type="ComplexPortal" id="CPX-4384">
    <property type="entry name" value="Putrescine ABC transporter complex"/>
</dbReference>
<dbReference type="FunCoup" id="P31135">
    <property type="interactions" value="225"/>
</dbReference>
<dbReference type="IntAct" id="P31135">
    <property type="interactions" value="1"/>
</dbReference>
<dbReference type="STRING" id="511145.b0856"/>
<dbReference type="TCDB" id="3.A.1.11.2">
    <property type="family name" value="the atp-binding cassette (abc) superfamily"/>
</dbReference>
<dbReference type="PaxDb" id="511145-b0856"/>
<dbReference type="EnsemblBacteria" id="AAC73943">
    <property type="protein sequence ID" value="AAC73943"/>
    <property type="gene ID" value="b0856"/>
</dbReference>
<dbReference type="GeneID" id="945475"/>
<dbReference type="KEGG" id="ecj:JW0840"/>
<dbReference type="KEGG" id="eco:b0856"/>
<dbReference type="KEGG" id="ecoc:C3026_05340"/>
<dbReference type="PATRIC" id="fig|1411691.4.peg.1421"/>
<dbReference type="EchoBASE" id="EB1588"/>
<dbReference type="eggNOG" id="COG1176">
    <property type="taxonomic scope" value="Bacteria"/>
</dbReference>
<dbReference type="HOGENOM" id="CLU_016047_18_3_6"/>
<dbReference type="InParanoid" id="P31135"/>
<dbReference type="OMA" id="YPIAYGM"/>
<dbReference type="OrthoDB" id="9807047at2"/>
<dbReference type="PhylomeDB" id="P31135"/>
<dbReference type="BioCyc" id="EcoCyc:POTH-MONOMER"/>
<dbReference type="BioCyc" id="MetaCyc:POTH-MONOMER"/>
<dbReference type="PRO" id="PR:P31135"/>
<dbReference type="Proteomes" id="UP000000625">
    <property type="component" value="Chromosome"/>
</dbReference>
<dbReference type="GO" id="GO:0043190">
    <property type="term" value="C:ATP-binding cassette (ABC) transporter complex"/>
    <property type="evidence" value="ECO:0000304"/>
    <property type="project" value="EcoCyc"/>
</dbReference>
<dbReference type="GO" id="GO:0055052">
    <property type="term" value="C:ATP-binding cassette (ABC) transporter complex, substrate-binding subunit-containing"/>
    <property type="evidence" value="ECO:0000303"/>
    <property type="project" value="ComplexPortal"/>
</dbReference>
<dbReference type="GO" id="GO:0016020">
    <property type="term" value="C:membrane"/>
    <property type="evidence" value="ECO:0000303"/>
    <property type="project" value="ComplexPortal"/>
</dbReference>
<dbReference type="GO" id="GO:0005886">
    <property type="term" value="C:plasma membrane"/>
    <property type="evidence" value="ECO:0000314"/>
    <property type="project" value="EcoCyc"/>
</dbReference>
<dbReference type="GO" id="GO:0015847">
    <property type="term" value="P:putrescine transport"/>
    <property type="evidence" value="ECO:0000314"/>
    <property type="project" value="EcoCyc"/>
</dbReference>
<dbReference type="GO" id="GO:0055085">
    <property type="term" value="P:transmembrane transport"/>
    <property type="evidence" value="ECO:0007669"/>
    <property type="project" value="InterPro"/>
</dbReference>
<dbReference type="CDD" id="cd06261">
    <property type="entry name" value="TM_PBP2"/>
    <property type="match status" value="1"/>
</dbReference>
<dbReference type="FunFam" id="1.10.3720.10:FF:000043">
    <property type="entry name" value="Putrescine ABC transporter permease PotH"/>
    <property type="match status" value="1"/>
</dbReference>
<dbReference type="Gene3D" id="1.10.3720.10">
    <property type="entry name" value="MetI-like"/>
    <property type="match status" value="1"/>
</dbReference>
<dbReference type="InterPro" id="IPR000515">
    <property type="entry name" value="MetI-like"/>
</dbReference>
<dbReference type="InterPro" id="IPR035906">
    <property type="entry name" value="MetI-like_sf"/>
</dbReference>
<dbReference type="NCBIfam" id="NF007963">
    <property type="entry name" value="PRK10683.1"/>
    <property type="match status" value="1"/>
</dbReference>
<dbReference type="PANTHER" id="PTHR42929">
    <property type="entry name" value="INNER MEMBRANE ABC TRANSPORTER PERMEASE PROTEIN YDCU-RELATED-RELATED"/>
    <property type="match status" value="1"/>
</dbReference>
<dbReference type="PANTHER" id="PTHR42929:SF3">
    <property type="entry name" value="PUTRESCINE TRANSPORT SYSTEM PERMEASE PROTEIN POTH"/>
    <property type="match status" value="1"/>
</dbReference>
<dbReference type="Pfam" id="PF00528">
    <property type="entry name" value="BPD_transp_1"/>
    <property type="match status" value="1"/>
</dbReference>
<dbReference type="SUPFAM" id="SSF161098">
    <property type="entry name" value="MetI-like"/>
    <property type="match status" value="1"/>
</dbReference>
<dbReference type="PROSITE" id="PS50928">
    <property type="entry name" value="ABC_TM1"/>
    <property type="match status" value="1"/>
</dbReference>
<protein>
    <recommendedName>
        <fullName evidence="7">Putrescine transport system permease protein PotH</fullName>
    </recommendedName>
</protein>
<organism>
    <name type="scientific">Escherichia coli (strain K12)</name>
    <dbReference type="NCBI Taxonomy" id="83333"/>
    <lineage>
        <taxon>Bacteria</taxon>
        <taxon>Pseudomonadati</taxon>
        <taxon>Pseudomonadota</taxon>
        <taxon>Gammaproteobacteria</taxon>
        <taxon>Enterobacterales</taxon>
        <taxon>Enterobacteriaceae</taxon>
        <taxon>Escherichia</taxon>
    </lineage>
</organism>
<gene>
    <name evidence="6" type="primary">potH</name>
    <name type="ordered locus">b0856</name>
    <name type="ordered locus">JW0840</name>
</gene>
<accession>P31135</accession>
<name>POTH_ECOLI</name>
<reference key="1">
    <citation type="journal article" date="1993" name="J. Biol. Chem.">
        <title>Characteristics of the operon for a putrescine transport system that maps at 19 minutes on the Escherichia coli chromosome.</title>
        <authorList>
            <person name="Pistocchi R."/>
            <person name="Kashiwagi K."/>
            <person name="Miyamoto S."/>
            <person name="Nukui E."/>
            <person name="Sadakata Y."/>
            <person name="Kobayashi H."/>
            <person name="Igarashi K."/>
        </authorList>
    </citation>
    <scope>NUCLEOTIDE SEQUENCE [GENOMIC DNA]</scope>
    <scope>FUNCTION</scope>
    <scope>SUBUNIT</scope>
</reference>
<reference key="2">
    <citation type="journal article" date="1996" name="DNA Res.">
        <title>A 718-kb DNA sequence of the Escherichia coli K-12 genome corresponding to the 12.7-28.0 min region on the linkage map.</title>
        <authorList>
            <person name="Oshima T."/>
            <person name="Aiba H."/>
            <person name="Baba T."/>
            <person name="Fujita K."/>
            <person name="Hayashi K."/>
            <person name="Honjo A."/>
            <person name="Ikemoto K."/>
            <person name="Inada T."/>
            <person name="Itoh T."/>
            <person name="Kajihara M."/>
            <person name="Kanai K."/>
            <person name="Kashimoto K."/>
            <person name="Kimura S."/>
            <person name="Kitagawa M."/>
            <person name="Makino K."/>
            <person name="Masuda S."/>
            <person name="Miki T."/>
            <person name="Mizobuchi K."/>
            <person name="Mori H."/>
            <person name="Motomura K."/>
            <person name="Nakamura Y."/>
            <person name="Nashimoto H."/>
            <person name="Nishio Y."/>
            <person name="Saito N."/>
            <person name="Sampei G."/>
            <person name="Seki Y."/>
            <person name="Tagami H."/>
            <person name="Takemoto K."/>
            <person name="Wada C."/>
            <person name="Yamamoto Y."/>
            <person name="Yano M."/>
            <person name="Horiuchi T."/>
        </authorList>
    </citation>
    <scope>NUCLEOTIDE SEQUENCE [LARGE SCALE GENOMIC DNA]</scope>
    <source>
        <strain>K12 / W3110 / ATCC 27325 / DSM 5911</strain>
    </source>
</reference>
<reference key="3">
    <citation type="journal article" date="1997" name="Science">
        <title>The complete genome sequence of Escherichia coli K-12.</title>
        <authorList>
            <person name="Blattner F.R."/>
            <person name="Plunkett G. III"/>
            <person name="Bloch C.A."/>
            <person name="Perna N.T."/>
            <person name="Burland V."/>
            <person name="Riley M."/>
            <person name="Collado-Vides J."/>
            <person name="Glasner J.D."/>
            <person name="Rode C.K."/>
            <person name="Mayhew G.F."/>
            <person name="Gregor J."/>
            <person name="Davis N.W."/>
            <person name="Kirkpatrick H.A."/>
            <person name="Goeden M.A."/>
            <person name="Rose D.J."/>
            <person name="Mau B."/>
            <person name="Shao Y."/>
        </authorList>
    </citation>
    <scope>NUCLEOTIDE SEQUENCE [LARGE SCALE GENOMIC DNA]</scope>
    <source>
        <strain>K12 / MG1655 / ATCC 47076</strain>
    </source>
</reference>
<reference key="4">
    <citation type="journal article" date="2006" name="Mol. Syst. Biol.">
        <title>Highly accurate genome sequences of Escherichia coli K-12 strains MG1655 and W3110.</title>
        <authorList>
            <person name="Hayashi K."/>
            <person name="Morooka N."/>
            <person name="Yamamoto Y."/>
            <person name="Fujita K."/>
            <person name="Isono K."/>
            <person name="Choi S."/>
            <person name="Ohtsubo E."/>
            <person name="Baba T."/>
            <person name="Wanner B.L."/>
            <person name="Mori H."/>
            <person name="Horiuchi T."/>
        </authorList>
    </citation>
    <scope>NUCLEOTIDE SEQUENCE [LARGE SCALE GENOMIC DNA]</scope>
    <source>
        <strain>K12 / W3110 / ATCC 27325 / DSM 5911</strain>
    </source>
</reference>
<reference key="5">
    <citation type="journal article" date="2005" name="Science">
        <title>Global topology analysis of the Escherichia coli inner membrane proteome.</title>
        <authorList>
            <person name="Daley D.O."/>
            <person name="Rapp M."/>
            <person name="Granseth E."/>
            <person name="Melen K."/>
            <person name="Drew D."/>
            <person name="von Heijne G."/>
        </authorList>
    </citation>
    <scope>TOPOLOGY [LARGE SCALE ANALYSIS]</scope>
    <source>
        <strain>K12 / MG1655 / ATCC 47076</strain>
    </source>
</reference>
<reference key="6">
    <citation type="journal article" date="2014" name="Amino Acids">
        <title>Properties of putrescine uptake by PotFGHI and PuuP and their physiological significance in Escherichia coli.</title>
        <authorList>
            <person name="Terui Y."/>
            <person name="Saroj S.D."/>
            <person name="Sakamoto A."/>
            <person name="Yoshida T."/>
            <person name="Higashi K."/>
            <person name="Kurihara S."/>
            <person name="Suzuki H."/>
            <person name="Toida T."/>
            <person name="Kashiwagi K."/>
            <person name="Igarashi K."/>
        </authorList>
    </citation>
    <scope>FUNCTION</scope>
    <scope>ACTIVITY REGULATION</scope>
    <scope>SUBUNIT</scope>
</reference>
<comment type="function">
    <text evidence="4 5 7">Part of the ABC transporter complex PotFGHI involved in putrescine uptake (PubMed:23719730, PubMed:8416922). Responsible for the translocation of the substrate across the membrane (Probable). Imports putrescine for maintenance of the optimal concentration of polyamines necessary for cell growth in the presence of glucose (PubMed:23719730).</text>
</comment>
<comment type="activity regulation">
    <text evidence="4">Transport is feedback inhibited by intracellular polyamines.</text>
</comment>
<comment type="subunit">
    <text evidence="4 5">The complex is composed of two ATP-binding proteins (PotG), two transmembrane proteins (PotH and PotI) and a solute-binding protein (PotF).</text>
</comment>
<comment type="subcellular location">
    <subcellularLocation>
        <location evidence="3">Cell inner membrane</location>
        <topology evidence="1">Multi-pass membrane protein</topology>
    </subcellularLocation>
</comment>
<comment type="similarity">
    <text evidence="7">Belongs to the binding-protein-dependent transport system permease family. CysTW subfamily.</text>
</comment>
<evidence type="ECO:0000255" key="1"/>
<evidence type="ECO:0000255" key="2">
    <source>
        <dbReference type="PROSITE-ProRule" id="PRU00441"/>
    </source>
</evidence>
<evidence type="ECO:0000269" key="3">
    <source>
    </source>
</evidence>
<evidence type="ECO:0000269" key="4">
    <source>
    </source>
</evidence>
<evidence type="ECO:0000269" key="5">
    <source>
    </source>
</evidence>
<evidence type="ECO:0000303" key="6">
    <source>
    </source>
</evidence>
<evidence type="ECO:0000305" key="7"/>
<evidence type="ECO:0000305" key="8">
    <source>
    </source>
</evidence>
<keyword id="KW-0997">Cell inner membrane</keyword>
<keyword id="KW-1003">Cell membrane</keyword>
<keyword id="KW-0472">Membrane</keyword>
<keyword id="KW-1185">Reference proteome</keyword>
<keyword id="KW-0812">Transmembrane</keyword>
<keyword id="KW-1133">Transmembrane helix</keyword>
<keyword id="KW-0813">Transport</keyword>
<sequence>MSTLEPAAQSKPPGGFKLWLSQLQMKHGRKLVIALPYIWLILLFLLPFLIVFKISLAEMARAIPPYTELMEWADGQLSITLNLGNFLQLTDDPLYFDAYLQSLQVAAISTFCCLLIGYPLAWAVAHSKPSTRNILLLLVILPSWTSFLIRVYAWMGILKNNGVLNNFLLWLGVIDQPLTILHTNLAVYIGIVYAYVPFMVLPIYTALIRIDYSLVEAALDLGARPLKTFFTVIVPLTKGGIIAGSMLVFIPAVGEFVIPELLGGPDSIMIGRVLWQEFFNNRDWPVASAVAIIMLLLLIVPIMWFHKHQQKSVGEHG</sequence>